<proteinExistence type="inferred from homology"/>
<dbReference type="EC" id="2.7.4.9" evidence="1"/>
<dbReference type="EMBL" id="CP000918">
    <property type="protein sequence ID" value="ACO16032.1"/>
    <property type="molecule type" value="Genomic_DNA"/>
</dbReference>
<dbReference type="RefSeq" id="WP_000033362.1">
    <property type="nucleotide sequence ID" value="NC_012468.1"/>
</dbReference>
<dbReference type="SMR" id="C1C6R6"/>
<dbReference type="GeneID" id="45218575"/>
<dbReference type="KEGG" id="snm:SP70585_0973"/>
<dbReference type="HOGENOM" id="CLU_049131_0_2_9"/>
<dbReference type="Proteomes" id="UP000002211">
    <property type="component" value="Chromosome"/>
</dbReference>
<dbReference type="GO" id="GO:0005829">
    <property type="term" value="C:cytosol"/>
    <property type="evidence" value="ECO:0007669"/>
    <property type="project" value="TreeGrafter"/>
</dbReference>
<dbReference type="GO" id="GO:0005524">
    <property type="term" value="F:ATP binding"/>
    <property type="evidence" value="ECO:0007669"/>
    <property type="project" value="UniProtKB-UniRule"/>
</dbReference>
<dbReference type="GO" id="GO:0004798">
    <property type="term" value="F:dTMP kinase activity"/>
    <property type="evidence" value="ECO:0007669"/>
    <property type="project" value="UniProtKB-UniRule"/>
</dbReference>
<dbReference type="GO" id="GO:0006233">
    <property type="term" value="P:dTDP biosynthetic process"/>
    <property type="evidence" value="ECO:0007669"/>
    <property type="project" value="InterPro"/>
</dbReference>
<dbReference type="GO" id="GO:0006235">
    <property type="term" value="P:dTTP biosynthetic process"/>
    <property type="evidence" value="ECO:0007669"/>
    <property type="project" value="UniProtKB-UniRule"/>
</dbReference>
<dbReference type="GO" id="GO:0006227">
    <property type="term" value="P:dUDP biosynthetic process"/>
    <property type="evidence" value="ECO:0007669"/>
    <property type="project" value="TreeGrafter"/>
</dbReference>
<dbReference type="CDD" id="cd01672">
    <property type="entry name" value="TMPK"/>
    <property type="match status" value="1"/>
</dbReference>
<dbReference type="FunFam" id="3.40.50.300:FF:000225">
    <property type="entry name" value="Thymidylate kinase"/>
    <property type="match status" value="1"/>
</dbReference>
<dbReference type="Gene3D" id="3.40.50.300">
    <property type="entry name" value="P-loop containing nucleotide triphosphate hydrolases"/>
    <property type="match status" value="1"/>
</dbReference>
<dbReference type="HAMAP" id="MF_00165">
    <property type="entry name" value="Thymidylate_kinase"/>
    <property type="match status" value="1"/>
</dbReference>
<dbReference type="InterPro" id="IPR027417">
    <property type="entry name" value="P-loop_NTPase"/>
</dbReference>
<dbReference type="InterPro" id="IPR039430">
    <property type="entry name" value="Thymidylate_kin-like_dom"/>
</dbReference>
<dbReference type="InterPro" id="IPR018095">
    <property type="entry name" value="Thymidylate_kin_CS"/>
</dbReference>
<dbReference type="InterPro" id="IPR018094">
    <property type="entry name" value="Thymidylate_kinase"/>
</dbReference>
<dbReference type="NCBIfam" id="TIGR00041">
    <property type="entry name" value="DTMP_kinase"/>
    <property type="match status" value="1"/>
</dbReference>
<dbReference type="PANTHER" id="PTHR10344">
    <property type="entry name" value="THYMIDYLATE KINASE"/>
    <property type="match status" value="1"/>
</dbReference>
<dbReference type="PANTHER" id="PTHR10344:SF4">
    <property type="entry name" value="UMP-CMP KINASE 2, MITOCHONDRIAL"/>
    <property type="match status" value="1"/>
</dbReference>
<dbReference type="Pfam" id="PF02223">
    <property type="entry name" value="Thymidylate_kin"/>
    <property type="match status" value="1"/>
</dbReference>
<dbReference type="SUPFAM" id="SSF52540">
    <property type="entry name" value="P-loop containing nucleoside triphosphate hydrolases"/>
    <property type="match status" value="1"/>
</dbReference>
<dbReference type="PROSITE" id="PS01331">
    <property type="entry name" value="THYMIDYLATE_KINASE"/>
    <property type="match status" value="1"/>
</dbReference>
<keyword id="KW-0067">ATP-binding</keyword>
<keyword id="KW-0418">Kinase</keyword>
<keyword id="KW-0545">Nucleotide biosynthesis</keyword>
<keyword id="KW-0547">Nucleotide-binding</keyword>
<keyword id="KW-0808">Transferase</keyword>
<organism>
    <name type="scientific">Streptococcus pneumoniae (strain 70585)</name>
    <dbReference type="NCBI Taxonomy" id="488221"/>
    <lineage>
        <taxon>Bacteria</taxon>
        <taxon>Bacillati</taxon>
        <taxon>Bacillota</taxon>
        <taxon>Bacilli</taxon>
        <taxon>Lactobacillales</taxon>
        <taxon>Streptococcaceae</taxon>
        <taxon>Streptococcus</taxon>
    </lineage>
</organism>
<sequence>MSKGFLVSLEGPEGAGKTSVLEALLPILEEKGVEVLTTREPGGVLIGEKIREVILDPSHTQMDAKTELLLYIASRRQHLVEKVLPALEAGKLVIMDRFIDSSVAYQGFGRGLDIEAIDWLNQFATDGLKPDLTLYFDIEVEEGLARIAANSDREVNRLDLEGLDLHKKVRQGYLSLLDKEGNRIVKIDASLPLEQVVETTKAVLFDGMGLAK</sequence>
<protein>
    <recommendedName>
        <fullName evidence="1">Thymidylate kinase</fullName>
        <ecNumber evidence="1">2.7.4.9</ecNumber>
    </recommendedName>
    <alternativeName>
        <fullName evidence="1">dTMP kinase</fullName>
    </alternativeName>
</protein>
<reference key="1">
    <citation type="journal article" date="2010" name="Genome Biol.">
        <title>Structure and dynamics of the pan-genome of Streptococcus pneumoniae and closely related species.</title>
        <authorList>
            <person name="Donati C."/>
            <person name="Hiller N.L."/>
            <person name="Tettelin H."/>
            <person name="Muzzi A."/>
            <person name="Croucher N.J."/>
            <person name="Angiuoli S.V."/>
            <person name="Oggioni M."/>
            <person name="Dunning Hotopp J.C."/>
            <person name="Hu F.Z."/>
            <person name="Riley D.R."/>
            <person name="Covacci A."/>
            <person name="Mitchell T.J."/>
            <person name="Bentley S.D."/>
            <person name="Kilian M."/>
            <person name="Ehrlich G.D."/>
            <person name="Rappuoli R."/>
            <person name="Moxon E.R."/>
            <person name="Masignani V."/>
        </authorList>
    </citation>
    <scope>NUCLEOTIDE SEQUENCE [LARGE SCALE GENOMIC DNA]</scope>
    <source>
        <strain>70585</strain>
    </source>
</reference>
<evidence type="ECO:0000255" key="1">
    <source>
        <dbReference type="HAMAP-Rule" id="MF_00165"/>
    </source>
</evidence>
<feature type="chain" id="PRO_1000123590" description="Thymidylate kinase">
    <location>
        <begin position="1"/>
        <end position="212"/>
    </location>
</feature>
<feature type="binding site" evidence="1">
    <location>
        <begin position="11"/>
        <end position="18"/>
    </location>
    <ligand>
        <name>ATP</name>
        <dbReference type="ChEBI" id="CHEBI:30616"/>
    </ligand>
</feature>
<accession>C1C6R6</accession>
<name>KTHY_STRP7</name>
<comment type="function">
    <text evidence="1">Phosphorylation of dTMP to form dTDP in both de novo and salvage pathways of dTTP synthesis.</text>
</comment>
<comment type="catalytic activity">
    <reaction evidence="1">
        <text>dTMP + ATP = dTDP + ADP</text>
        <dbReference type="Rhea" id="RHEA:13517"/>
        <dbReference type="ChEBI" id="CHEBI:30616"/>
        <dbReference type="ChEBI" id="CHEBI:58369"/>
        <dbReference type="ChEBI" id="CHEBI:63528"/>
        <dbReference type="ChEBI" id="CHEBI:456216"/>
        <dbReference type="EC" id="2.7.4.9"/>
    </reaction>
</comment>
<comment type="similarity">
    <text evidence="1">Belongs to the thymidylate kinase family.</text>
</comment>
<gene>
    <name evidence="1" type="primary">tmk</name>
    <name type="ordered locus">SP70585_0973</name>
</gene>